<protein>
    <recommendedName>
        <fullName evidence="1">Energy-coupling factor transporter ATP-binding protein EcfA</fullName>
        <shortName evidence="1">ECF transporter A component EcfA</shortName>
        <ecNumber evidence="1">7.-.-.-</ecNumber>
    </recommendedName>
</protein>
<name>ECFA_PEDPA</name>
<dbReference type="EC" id="7.-.-.-" evidence="1"/>
<dbReference type="EMBL" id="CP000422">
    <property type="protein sequence ID" value="ABJ68428.1"/>
    <property type="molecule type" value="Genomic_DNA"/>
</dbReference>
<dbReference type="RefSeq" id="WP_002833354.1">
    <property type="nucleotide sequence ID" value="NC_008525.1"/>
</dbReference>
<dbReference type="SMR" id="Q03EE4"/>
<dbReference type="STRING" id="278197.PEPE_1390"/>
<dbReference type="GeneID" id="33061258"/>
<dbReference type="KEGG" id="ppe:PEPE_1390"/>
<dbReference type="eggNOG" id="COG1122">
    <property type="taxonomic scope" value="Bacteria"/>
</dbReference>
<dbReference type="HOGENOM" id="CLU_000604_1_22_9"/>
<dbReference type="OrthoDB" id="9784332at2"/>
<dbReference type="Proteomes" id="UP000000773">
    <property type="component" value="Chromosome"/>
</dbReference>
<dbReference type="GO" id="GO:0043190">
    <property type="term" value="C:ATP-binding cassette (ABC) transporter complex"/>
    <property type="evidence" value="ECO:0007669"/>
    <property type="project" value="TreeGrafter"/>
</dbReference>
<dbReference type="GO" id="GO:0005524">
    <property type="term" value="F:ATP binding"/>
    <property type="evidence" value="ECO:0007669"/>
    <property type="project" value="UniProtKB-KW"/>
</dbReference>
<dbReference type="GO" id="GO:0016887">
    <property type="term" value="F:ATP hydrolysis activity"/>
    <property type="evidence" value="ECO:0007669"/>
    <property type="project" value="InterPro"/>
</dbReference>
<dbReference type="GO" id="GO:0042626">
    <property type="term" value="F:ATPase-coupled transmembrane transporter activity"/>
    <property type="evidence" value="ECO:0007669"/>
    <property type="project" value="TreeGrafter"/>
</dbReference>
<dbReference type="CDD" id="cd03225">
    <property type="entry name" value="ABC_cobalt_CbiO_domain1"/>
    <property type="match status" value="1"/>
</dbReference>
<dbReference type="FunFam" id="3.40.50.300:FF:000224">
    <property type="entry name" value="Energy-coupling factor transporter ATP-binding protein EcfA"/>
    <property type="match status" value="1"/>
</dbReference>
<dbReference type="Gene3D" id="3.40.50.300">
    <property type="entry name" value="P-loop containing nucleotide triphosphate hydrolases"/>
    <property type="match status" value="1"/>
</dbReference>
<dbReference type="InterPro" id="IPR003593">
    <property type="entry name" value="AAA+_ATPase"/>
</dbReference>
<dbReference type="InterPro" id="IPR003439">
    <property type="entry name" value="ABC_transporter-like_ATP-bd"/>
</dbReference>
<dbReference type="InterPro" id="IPR017871">
    <property type="entry name" value="ABC_transporter-like_CS"/>
</dbReference>
<dbReference type="InterPro" id="IPR015856">
    <property type="entry name" value="ABC_transpr_CbiO/EcfA_su"/>
</dbReference>
<dbReference type="InterPro" id="IPR050095">
    <property type="entry name" value="ECF_ABC_transporter_ATP-bd"/>
</dbReference>
<dbReference type="InterPro" id="IPR030947">
    <property type="entry name" value="EcfA_1"/>
</dbReference>
<dbReference type="InterPro" id="IPR027417">
    <property type="entry name" value="P-loop_NTPase"/>
</dbReference>
<dbReference type="NCBIfam" id="TIGR04520">
    <property type="entry name" value="ECF_ATPase_1"/>
    <property type="match status" value="1"/>
</dbReference>
<dbReference type="NCBIfam" id="NF010167">
    <property type="entry name" value="PRK13648.1"/>
    <property type="match status" value="1"/>
</dbReference>
<dbReference type="PANTHER" id="PTHR43553:SF24">
    <property type="entry name" value="ENERGY-COUPLING FACTOR TRANSPORTER ATP-BINDING PROTEIN ECFA1"/>
    <property type="match status" value="1"/>
</dbReference>
<dbReference type="PANTHER" id="PTHR43553">
    <property type="entry name" value="HEAVY METAL TRANSPORTER"/>
    <property type="match status" value="1"/>
</dbReference>
<dbReference type="Pfam" id="PF00005">
    <property type="entry name" value="ABC_tran"/>
    <property type="match status" value="1"/>
</dbReference>
<dbReference type="SMART" id="SM00382">
    <property type="entry name" value="AAA"/>
    <property type="match status" value="1"/>
</dbReference>
<dbReference type="SUPFAM" id="SSF52540">
    <property type="entry name" value="P-loop containing nucleoside triphosphate hydrolases"/>
    <property type="match status" value="1"/>
</dbReference>
<dbReference type="PROSITE" id="PS00211">
    <property type="entry name" value="ABC_TRANSPORTER_1"/>
    <property type="match status" value="1"/>
</dbReference>
<dbReference type="PROSITE" id="PS50893">
    <property type="entry name" value="ABC_TRANSPORTER_2"/>
    <property type="match status" value="1"/>
</dbReference>
<dbReference type="PROSITE" id="PS51246">
    <property type="entry name" value="CBIO"/>
    <property type="match status" value="1"/>
</dbReference>
<proteinExistence type="inferred from homology"/>
<feature type="chain" id="PRO_0000287979" description="Energy-coupling factor transporter ATP-binding protein EcfA">
    <location>
        <begin position="1"/>
        <end position="280"/>
    </location>
</feature>
<feature type="domain" description="ABC transporter" evidence="1">
    <location>
        <begin position="5"/>
        <end position="240"/>
    </location>
</feature>
<feature type="binding site" evidence="1">
    <location>
        <begin position="40"/>
        <end position="47"/>
    </location>
    <ligand>
        <name>ATP</name>
        <dbReference type="ChEBI" id="CHEBI:30616"/>
    </ligand>
</feature>
<keyword id="KW-0067">ATP-binding</keyword>
<keyword id="KW-1003">Cell membrane</keyword>
<keyword id="KW-0472">Membrane</keyword>
<keyword id="KW-0547">Nucleotide-binding</keyword>
<keyword id="KW-1278">Translocase</keyword>
<keyword id="KW-0813">Transport</keyword>
<sequence>MNNIIDVKNLTYKYANSGDKKALDNVSLSIEKGSWTSIVGHNGSGKSTLARSIDGLMSYNEGVINVDGIILSDDTVWDIRKKIGMIFQNPDNQFVGATVEDDVAFGLENLGIETDKMHKIVNNVLKKVRMEDFKERQPDQLSGGQKQRVAIAGVLASKPEIIILDEATSMLDPQGRYEIINLINEIHQENDITVISITHDVSEAMLSDHVIVLNDGKIVESGAPKKVFNDDEMLKLTGLEKPFNAHLFDALVEQGIHPPVELRMDENDLEEWLCQLLLKA</sequence>
<organism>
    <name type="scientific">Pediococcus pentosaceus (strain ATCC 25745 / CCUG 21536 / LMG 10740 / 183-1w)</name>
    <dbReference type="NCBI Taxonomy" id="278197"/>
    <lineage>
        <taxon>Bacteria</taxon>
        <taxon>Bacillati</taxon>
        <taxon>Bacillota</taxon>
        <taxon>Bacilli</taxon>
        <taxon>Lactobacillales</taxon>
        <taxon>Lactobacillaceae</taxon>
        <taxon>Pediococcus</taxon>
    </lineage>
</organism>
<accession>Q03EE4</accession>
<comment type="function">
    <text evidence="1">ATP-binding (A) component of a common energy-coupling factor (ECF) ABC-transporter complex. Unlike classic ABC transporters this ECF transporter provides the energy necessary to transport a number of different substrates.</text>
</comment>
<comment type="subunit">
    <text evidence="1">Forms a stable energy-coupling factor (ECF) transporter complex composed of 2 membrane-embedded substrate-binding proteins (S component), 2 ATP-binding proteins (A component) and 2 transmembrane proteins (T component).</text>
</comment>
<comment type="subcellular location">
    <subcellularLocation>
        <location evidence="1">Cell membrane</location>
        <topology evidence="1">Peripheral membrane protein</topology>
    </subcellularLocation>
</comment>
<comment type="similarity">
    <text evidence="1">Belongs to the ABC transporter superfamily. Energy-coupling factor EcfA family.</text>
</comment>
<reference key="1">
    <citation type="journal article" date="2006" name="Proc. Natl. Acad. Sci. U.S.A.">
        <title>Comparative genomics of the lactic acid bacteria.</title>
        <authorList>
            <person name="Makarova K.S."/>
            <person name="Slesarev A."/>
            <person name="Wolf Y.I."/>
            <person name="Sorokin A."/>
            <person name="Mirkin B."/>
            <person name="Koonin E.V."/>
            <person name="Pavlov A."/>
            <person name="Pavlova N."/>
            <person name="Karamychev V."/>
            <person name="Polouchine N."/>
            <person name="Shakhova V."/>
            <person name="Grigoriev I."/>
            <person name="Lou Y."/>
            <person name="Rohksar D."/>
            <person name="Lucas S."/>
            <person name="Huang K."/>
            <person name="Goodstein D.M."/>
            <person name="Hawkins T."/>
            <person name="Plengvidhya V."/>
            <person name="Welker D."/>
            <person name="Hughes J."/>
            <person name="Goh Y."/>
            <person name="Benson A."/>
            <person name="Baldwin K."/>
            <person name="Lee J.-H."/>
            <person name="Diaz-Muniz I."/>
            <person name="Dosti B."/>
            <person name="Smeianov V."/>
            <person name="Wechter W."/>
            <person name="Barabote R."/>
            <person name="Lorca G."/>
            <person name="Altermann E."/>
            <person name="Barrangou R."/>
            <person name="Ganesan B."/>
            <person name="Xie Y."/>
            <person name="Rawsthorne H."/>
            <person name="Tamir D."/>
            <person name="Parker C."/>
            <person name="Breidt F."/>
            <person name="Broadbent J.R."/>
            <person name="Hutkins R."/>
            <person name="O'Sullivan D."/>
            <person name="Steele J."/>
            <person name="Unlu G."/>
            <person name="Saier M.H. Jr."/>
            <person name="Klaenhammer T."/>
            <person name="Richardson P."/>
            <person name="Kozyavkin S."/>
            <person name="Weimer B.C."/>
            <person name="Mills D.A."/>
        </authorList>
    </citation>
    <scope>NUCLEOTIDE SEQUENCE [LARGE SCALE GENOMIC DNA]</scope>
    <source>
        <strain>ATCC 25745 / CCUG 21536 / LMG 10740 / 183-1w</strain>
    </source>
</reference>
<gene>
    <name evidence="1" type="primary">ecfA</name>
    <name type="synonym">cbiO</name>
    <name type="ordered locus">PEPE_1390</name>
</gene>
<evidence type="ECO:0000255" key="1">
    <source>
        <dbReference type="HAMAP-Rule" id="MF_01710"/>
    </source>
</evidence>